<evidence type="ECO:0000250" key="1">
    <source>
        <dbReference type="UniProtKB" id="Q8BYC6"/>
    </source>
</evidence>
<evidence type="ECO:0000250" key="2">
    <source>
        <dbReference type="UniProtKB" id="Q9H2K8"/>
    </source>
</evidence>
<evidence type="ECO:0000255" key="3"/>
<evidence type="ECO:0000255" key="4">
    <source>
        <dbReference type="PROSITE-ProRule" id="PRU00159"/>
    </source>
</evidence>
<evidence type="ECO:0000255" key="5">
    <source>
        <dbReference type="PROSITE-ProRule" id="PRU10027"/>
    </source>
</evidence>
<evidence type="ECO:0000256" key="6">
    <source>
        <dbReference type="SAM" id="MobiDB-lite"/>
    </source>
</evidence>
<evidence type="ECO:0000269" key="7">
    <source>
    </source>
</evidence>
<evidence type="ECO:0000305" key="8"/>
<evidence type="ECO:0007744" key="9">
    <source>
    </source>
</evidence>
<proteinExistence type="evidence at protein level"/>
<organism>
    <name type="scientific">Rattus norvegicus</name>
    <name type="common">Rat</name>
    <dbReference type="NCBI Taxonomy" id="10116"/>
    <lineage>
        <taxon>Eukaryota</taxon>
        <taxon>Metazoa</taxon>
        <taxon>Chordata</taxon>
        <taxon>Craniata</taxon>
        <taxon>Vertebrata</taxon>
        <taxon>Euteleostomi</taxon>
        <taxon>Mammalia</taxon>
        <taxon>Eutheria</taxon>
        <taxon>Euarchontoglires</taxon>
        <taxon>Glires</taxon>
        <taxon>Rodentia</taxon>
        <taxon>Myomorpha</taxon>
        <taxon>Muroidea</taxon>
        <taxon>Muridae</taxon>
        <taxon>Murinae</taxon>
        <taxon>Rattus</taxon>
    </lineage>
</organism>
<name>TAOK3_RAT</name>
<feature type="chain" id="PRO_0000086740" description="Serine/threonine-protein kinase TAO3">
    <location>
        <begin position="1"/>
        <end position="898"/>
    </location>
</feature>
<feature type="domain" description="Protein kinase" evidence="4">
    <location>
        <begin position="24"/>
        <end position="277"/>
    </location>
</feature>
<feature type="region of interest" description="Disordered" evidence="6">
    <location>
        <begin position="316"/>
        <end position="372"/>
    </location>
</feature>
<feature type="region of interest" description="Disordered" evidence="6">
    <location>
        <begin position="405"/>
        <end position="424"/>
    </location>
</feature>
<feature type="region of interest" description="Disordered" evidence="6">
    <location>
        <begin position="565"/>
        <end position="596"/>
    </location>
</feature>
<feature type="coiled-coil region" evidence="3">
    <location>
        <begin position="452"/>
        <end position="502"/>
    </location>
</feature>
<feature type="coiled-coil region" evidence="3">
    <location>
        <begin position="548"/>
        <end position="649"/>
    </location>
</feature>
<feature type="coiled-coil region" evidence="3">
    <location>
        <begin position="753"/>
        <end position="871"/>
    </location>
</feature>
<feature type="compositionally biased region" description="Low complexity" evidence="6">
    <location>
        <begin position="349"/>
        <end position="366"/>
    </location>
</feature>
<feature type="compositionally biased region" description="Basic and acidic residues" evidence="6">
    <location>
        <begin position="405"/>
        <end position="416"/>
    </location>
</feature>
<feature type="active site" description="Proton acceptor" evidence="4 5">
    <location>
        <position position="147"/>
    </location>
</feature>
<feature type="binding site" evidence="4">
    <location>
        <begin position="30"/>
        <end position="38"/>
    </location>
    <ligand>
        <name>ATP</name>
        <dbReference type="ChEBI" id="CHEBI:30616"/>
    </ligand>
</feature>
<feature type="binding site" evidence="4">
    <location>
        <position position="53"/>
    </location>
    <ligand>
        <name>ATP</name>
        <dbReference type="ChEBI" id="CHEBI:30616"/>
    </ligand>
</feature>
<feature type="modified residue" description="Phosphoserine" evidence="9">
    <location>
        <position position="324"/>
    </location>
</feature>
<feature type="modified residue" description="Phosphoserine" evidence="9">
    <location>
        <position position="331"/>
    </location>
</feature>
<feature type="modified residue" description="Phosphoserine" evidence="9">
    <location>
        <position position="343"/>
    </location>
</feature>
<feature type="modified residue" description="Phosphoserine" evidence="1">
    <location>
        <position position="346"/>
    </location>
</feature>
<feature type="modified residue" description="Phosphoserine" evidence="9">
    <location>
        <position position="349"/>
    </location>
</feature>
<feature type="modified residue" description="Phosphothreonine" evidence="1">
    <location>
        <position position="357"/>
    </location>
</feature>
<feature type="modified residue" description="Phosphoserine" evidence="1">
    <location>
        <position position="359"/>
    </location>
</feature>
<feature type="modified residue" description="Phosphoserine" evidence="9">
    <location>
        <position position="442"/>
    </location>
</feature>
<feature type="modified residue" description="N6-acetyllysine" evidence="1">
    <location>
        <position position="830"/>
    </location>
</feature>
<sequence length="898" mass="105474">MRKGVLKDPEIAELFFKEDPEELFIDLHEIGHGSFGAVYFATNAHTNEVVAIKKMSYSGKQTHEKWQDILKEVRFLQQLKHPNTIEYKGCYLKEHTAWLVMEYCLGSASDLLEVHKKPLQEVEIAAITHGALQGLAYLHFHSLIHRDIKAGNILLTEPGQVKLADFGSASMASPANSFVGTPYWMAPEVILAMDEGQYDGKVDIWSLGITCIELAERKPPLFNMNAMSALYHIAQNDSPTLQSREWTDSFRRFVDYCLHKIPQERPAAAELLRHDFIRRERPPRVLIDLIQRTKDAVRELDNLQYRKMKKILFQETRNGPLNESQEEEEDSEQGSNLNREVDSLGSIHSIPSVSVSTGSRSSSVNSMQEVMDEGSPELVMMQEDEGTVNSSSSMVHKKDHVFVRDEAGHGDPRPEPRPTQSVQSRALHYRNRERFATIKSASLVTRQIHEHEQENELREQMSGYKRMRRQHQKQLIALENKLKAEMDEHRLKLQKEVETHANNSSIELEKLAKKQVATIEKEAKVAAADEKKFQQQILAQQKKDLTTFLESQKKQYKICKEKIKEEMNEDHSTPKKEKQERISKHKENLQHTQAEEEAHLLTQQRLYYDRNCRCFKRKIMTKRHEVEQQNIREELNKKRTQKEMEHAMLIRHDESTRELEYRQLHTLQKLRMDLIRLQHQTELENQLEYNKRRERELHRKHVMELRQQPKNLKAMEMQIKKQFQDTCKVQTKQYKALKNHQLEVTPKNEHKAILKTLKEEQTRKLAILAEQYEQSINEMMASQALRLDEAQEAECQALRLQLQQEMELLNAYQSKIKMQTEAQHERELQKLEQRVSLRRAHLEQKIEEELAALQKERSERIKTLLERQERETETFDMESLRMGFGNLVTLDFPKEDYR</sequence>
<dbReference type="EC" id="2.7.11.1"/>
<dbReference type="EMBL" id="AB195232">
    <property type="protein sequence ID" value="BAD97370.1"/>
    <property type="molecule type" value="mRNA"/>
</dbReference>
<dbReference type="RefSeq" id="NP_001019425.1">
    <property type="nucleotide sequence ID" value="NM_001024254.3"/>
</dbReference>
<dbReference type="RefSeq" id="NP_001417047.1">
    <property type="nucleotide sequence ID" value="NM_001430118.1"/>
</dbReference>
<dbReference type="SMR" id="Q53UA7"/>
<dbReference type="FunCoup" id="Q53UA7">
    <property type="interactions" value="3257"/>
</dbReference>
<dbReference type="IntAct" id="Q53UA7">
    <property type="interactions" value="1"/>
</dbReference>
<dbReference type="STRING" id="10116.ENSRNOP00000074994"/>
<dbReference type="iPTMnet" id="Q53UA7"/>
<dbReference type="PhosphoSitePlus" id="Q53UA7"/>
<dbReference type="PaxDb" id="10116-ENSRNOP00000001503"/>
<dbReference type="GeneID" id="304530"/>
<dbReference type="KEGG" id="rno:304530"/>
<dbReference type="UCSC" id="RGD:1562861">
    <property type="organism name" value="rat"/>
</dbReference>
<dbReference type="AGR" id="RGD:1562861"/>
<dbReference type="CTD" id="51347"/>
<dbReference type="RGD" id="1562861">
    <property type="gene designation" value="Taok3"/>
</dbReference>
<dbReference type="eggNOG" id="KOG0577">
    <property type="taxonomic scope" value="Eukaryota"/>
</dbReference>
<dbReference type="InParanoid" id="Q53UA7"/>
<dbReference type="OrthoDB" id="10016527at2759"/>
<dbReference type="PhylomeDB" id="Q53UA7"/>
<dbReference type="Reactome" id="R-RNO-9013149">
    <property type="pathway name" value="RAC1 GTPase cycle"/>
</dbReference>
<dbReference type="Reactome" id="R-RNO-9013404">
    <property type="pathway name" value="RAC2 GTPase cycle"/>
</dbReference>
<dbReference type="PRO" id="PR:Q53UA7"/>
<dbReference type="Proteomes" id="UP000002494">
    <property type="component" value="Unplaced"/>
</dbReference>
<dbReference type="GO" id="GO:0005737">
    <property type="term" value="C:cytoplasm"/>
    <property type="evidence" value="ECO:0000318"/>
    <property type="project" value="GO_Central"/>
</dbReference>
<dbReference type="GO" id="GO:0005811">
    <property type="term" value="C:lipid droplet"/>
    <property type="evidence" value="ECO:0007669"/>
    <property type="project" value="Ensembl"/>
</dbReference>
<dbReference type="GO" id="GO:0044853">
    <property type="term" value="C:plasma membrane raft"/>
    <property type="evidence" value="ECO:0007669"/>
    <property type="project" value="Ensembl"/>
</dbReference>
<dbReference type="GO" id="GO:0005524">
    <property type="term" value="F:ATP binding"/>
    <property type="evidence" value="ECO:0007669"/>
    <property type="project" value="UniProtKB-KW"/>
</dbReference>
<dbReference type="GO" id="GO:0106310">
    <property type="term" value="F:protein serine kinase activity"/>
    <property type="evidence" value="ECO:0007669"/>
    <property type="project" value="RHEA"/>
</dbReference>
<dbReference type="GO" id="GO:0004674">
    <property type="term" value="F:protein serine/threonine kinase activity"/>
    <property type="evidence" value="ECO:0000266"/>
    <property type="project" value="RGD"/>
</dbReference>
<dbReference type="GO" id="GO:0016740">
    <property type="term" value="F:transferase activity"/>
    <property type="evidence" value="ECO:0000266"/>
    <property type="project" value="RGD"/>
</dbReference>
<dbReference type="GO" id="GO:0006974">
    <property type="term" value="P:DNA damage response"/>
    <property type="evidence" value="ECO:0000250"/>
    <property type="project" value="UniProtKB"/>
</dbReference>
<dbReference type="GO" id="GO:0006281">
    <property type="term" value="P:DNA repair"/>
    <property type="evidence" value="ECO:0007669"/>
    <property type="project" value="UniProtKB-KW"/>
</dbReference>
<dbReference type="GO" id="GO:0000165">
    <property type="term" value="P:MAPK cascade"/>
    <property type="evidence" value="ECO:0000266"/>
    <property type="project" value="RGD"/>
</dbReference>
<dbReference type="GO" id="GO:0002315">
    <property type="term" value="P:marginal zone B cell differentiation"/>
    <property type="evidence" value="ECO:0007669"/>
    <property type="project" value="Ensembl"/>
</dbReference>
<dbReference type="GO" id="GO:0097029">
    <property type="term" value="P:mature conventional dendritic cell differentiation"/>
    <property type="evidence" value="ECO:0007669"/>
    <property type="project" value="Ensembl"/>
</dbReference>
<dbReference type="GO" id="GO:0007095">
    <property type="term" value="P:mitotic G2 DNA damage checkpoint signaling"/>
    <property type="evidence" value="ECO:0000250"/>
    <property type="project" value="UniProtKB"/>
</dbReference>
<dbReference type="GO" id="GO:0046329">
    <property type="term" value="P:negative regulation of JNK cascade"/>
    <property type="evidence" value="ECO:0000266"/>
    <property type="project" value="RGD"/>
</dbReference>
<dbReference type="GO" id="GO:0045650">
    <property type="term" value="P:negative regulation of macrophage differentiation"/>
    <property type="evidence" value="ECO:0007669"/>
    <property type="project" value="Ensembl"/>
</dbReference>
<dbReference type="GO" id="GO:0048812">
    <property type="term" value="P:neuron projection morphogenesis"/>
    <property type="evidence" value="ECO:0000318"/>
    <property type="project" value="GO_Central"/>
</dbReference>
<dbReference type="GO" id="GO:0046330">
    <property type="term" value="P:positive regulation of JNK cascade"/>
    <property type="evidence" value="ECO:0000266"/>
    <property type="project" value="RGD"/>
</dbReference>
<dbReference type="GO" id="GO:0010884">
    <property type="term" value="P:positive regulation of lipid storage"/>
    <property type="evidence" value="ECO:0007669"/>
    <property type="project" value="Ensembl"/>
</dbReference>
<dbReference type="GO" id="GO:0045669">
    <property type="term" value="P:positive regulation of osteoblast differentiation"/>
    <property type="evidence" value="ECO:0007669"/>
    <property type="project" value="Ensembl"/>
</dbReference>
<dbReference type="GO" id="GO:0032874">
    <property type="term" value="P:positive regulation of stress-activated MAPK cascade"/>
    <property type="evidence" value="ECO:0000250"/>
    <property type="project" value="UniProtKB"/>
</dbReference>
<dbReference type="GO" id="GO:0050862">
    <property type="term" value="P:positive regulation of T cell receptor signaling pathway"/>
    <property type="evidence" value="ECO:0007669"/>
    <property type="project" value="Ensembl"/>
</dbReference>
<dbReference type="GO" id="GO:0043408">
    <property type="term" value="P:regulation of MAPK cascade"/>
    <property type="evidence" value="ECO:0000318"/>
    <property type="project" value="GO_Central"/>
</dbReference>
<dbReference type="FunFam" id="1.10.510.10:FF:000030">
    <property type="entry name" value="Serine/threonine-protein kinase TAO2, putative"/>
    <property type="match status" value="1"/>
</dbReference>
<dbReference type="FunFam" id="3.30.200.20:FF:000029">
    <property type="entry name" value="Serine/threonine-protein kinase TAO2, putative"/>
    <property type="match status" value="1"/>
</dbReference>
<dbReference type="Gene3D" id="3.30.200.20">
    <property type="entry name" value="Phosphorylase Kinase, domain 1"/>
    <property type="match status" value="1"/>
</dbReference>
<dbReference type="Gene3D" id="1.10.510.10">
    <property type="entry name" value="Transferase(Phosphotransferase) domain 1"/>
    <property type="match status" value="1"/>
</dbReference>
<dbReference type="InterPro" id="IPR011009">
    <property type="entry name" value="Kinase-like_dom_sf"/>
</dbReference>
<dbReference type="InterPro" id="IPR000719">
    <property type="entry name" value="Prot_kinase_dom"/>
</dbReference>
<dbReference type="InterPro" id="IPR017441">
    <property type="entry name" value="Protein_kinase_ATP_BS"/>
</dbReference>
<dbReference type="InterPro" id="IPR008271">
    <property type="entry name" value="Ser/Thr_kinase_AS"/>
</dbReference>
<dbReference type="InterPro" id="IPR051234">
    <property type="entry name" value="TAO_STE20_kinase"/>
</dbReference>
<dbReference type="PANTHER" id="PTHR47167">
    <property type="entry name" value="SERINE/THREONINE-PROTEIN KINASE TAO1-LIKE PROTEIN"/>
    <property type="match status" value="1"/>
</dbReference>
<dbReference type="PANTHER" id="PTHR47167:SF10">
    <property type="entry name" value="SERINE_THREONINE-PROTEIN KINASE TAO3"/>
    <property type="match status" value="1"/>
</dbReference>
<dbReference type="Pfam" id="PF00069">
    <property type="entry name" value="Pkinase"/>
    <property type="match status" value="1"/>
</dbReference>
<dbReference type="SMART" id="SM00220">
    <property type="entry name" value="S_TKc"/>
    <property type="match status" value="1"/>
</dbReference>
<dbReference type="SUPFAM" id="SSF56112">
    <property type="entry name" value="Protein kinase-like (PK-like)"/>
    <property type="match status" value="1"/>
</dbReference>
<dbReference type="PROSITE" id="PS00107">
    <property type="entry name" value="PROTEIN_KINASE_ATP"/>
    <property type="match status" value="1"/>
</dbReference>
<dbReference type="PROSITE" id="PS50011">
    <property type="entry name" value="PROTEIN_KINASE_DOM"/>
    <property type="match status" value="1"/>
</dbReference>
<dbReference type="PROSITE" id="PS00108">
    <property type="entry name" value="PROTEIN_KINASE_ST"/>
    <property type="match status" value="1"/>
</dbReference>
<keyword id="KW-0007">Acetylation</keyword>
<keyword id="KW-0067">ATP-binding</keyword>
<keyword id="KW-1003">Cell membrane</keyword>
<keyword id="KW-0175">Coiled coil</keyword>
<keyword id="KW-0963">Cytoplasm</keyword>
<keyword id="KW-0227">DNA damage</keyword>
<keyword id="KW-0234">DNA repair</keyword>
<keyword id="KW-0418">Kinase</keyword>
<keyword id="KW-0551">Lipid droplet</keyword>
<keyword id="KW-0472">Membrane</keyword>
<keyword id="KW-0547">Nucleotide-binding</keyword>
<keyword id="KW-0597">Phosphoprotein</keyword>
<keyword id="KW-1185">Reference proteome</keyword>
<keyword id="KW-0723">Serine/threonine-protein kinase</keyword>
<keyword id="KW-0808">Transferase</keyword>
<protein>
    <recommendedName>
        <fullName>Serine/threonine-protein kinase TAO3</fullName>
        <ecNumber>2.7.11.1</ecNumber>
    </recommendedName>
    <alternativeName>
        <fullName>Axotomy-related gene 357 protein</fullName>
    </alternativeName>
    <alternativeName>
        <fullName>JNK/SAPK-inhibitory kinase</fullName>
    </alternativeName>
    <alternativeName>
        <fullName>Jun kinase-inhibitory kinase</fullName>
    </alternativeName>
    <alternativeName>
        <fullName>Thousand and one amino acid protein 3</fullName>
    </alternativeName>
</protein>
<reference key="1">
    <citation type="journal article" date="2005" name="J. Neurochem.">
        <title>JNK inhibitory kinase is up-regulated in retinal ganglion cells after axotomy and enhances BimEL expression level in neuronal cells.</title>
        <authorList>
            <person name="Wakabayashi T."/>
            <person name="Kosaka J."/>
            <person name="Oshika T."/>
        </authorList>
    </citation>
    <scope>NUCLEOTIDE SEQUENCE [MRNA]</scope>
    <scope>TISSUE SPECIFICITY</scope>
</reference>
<reference key="2">
    <citation type="journal article" date="2012" name="Nat. Commun.">
        <title>Quantitative maps of protein phosphorylation sites across 14 different rat organs and tissues.</title>
        <authorList>
            <person name="Lundby A."/>
            <person name="Secher A."/>
            <person name="Lage K."/>
            <person name="Nordsborg N.B."/>
            <person name="Dmytriyev A."/>
            <person name="Lundby C."/>
            <person name="Olsen J.V."/>
        </authorList>
    </citation>
    <scope>PHOSPHORYLATION [LARGE SCALE ANALYSIS] AT SER-324; SER-331; SER-343; SER-349 AND SER-442</scope>
    <scope>IDENTIFICATION BY MASS SPECTROMETRY [LARGE SCALE ANALYSIS]</scope>
</reference>
<gene>
    <name type="primary">Taok3</name>
    <name type="synonym">Arg357</name>
    <name type="synonym">Jik</name>
</gene>
<comment type="function">
    <text evidence="1 2">Serine/threonine-protein kinase that acts as a regulator of the p38/MAPK14 stress-activated MAPK cascade and of the MAPK8/JNK cascade. In response to DNA damage, involved in the G2/M transition DNA damage checkpoint by activating the p38/MAPK14 stress-activated MAPK cascade, probably by mediating phosphorylation of upstream MAP2K3 and MAP2K6 kinases. Inhibits basal activity of the MAPK8/JNK cascade and diminishes its activation in response to epidermal growth factor (EGF). Positively regulates canonical T cell receptor (TCR) signaling by preventing early PTPN6/SHP1-mediated inactivation of LCK, ensuring sustained TCR signaling that is required for optimal activation and differentiation of T cells. Phosphorylates PTPN6/SHP1 on 'Thr-396', leading to its polyubiquitination and subsequent proteasomal degradation. Required for cell surface expression of metalloprotease ADAM10 on type 1 transitional B cells which is necessary for their NOTCH-mediated development into marginal zone B cells. Also required for the NOTCH-mediated terminal differentiation of splenic conventional type 2 dendritic cells. Positively regulates osteoblast differentiation by acting as an upstream activator of the JNK pathway. Promotes JNK signaling in hepatocytes and positively regulates hepatocyte lipid storage by inhibiting beta-oxidation and triacylglycerol secretion while enhancing lipid synthesis. Restricts age-associated inflammation by negatively regulating differentiation of macrophages and their production of pro-inflammatory cytokines. Plays a role in negatively regulating the abundance of regulatory T cells in white adipose tissue.</text>
</comment>
<comment type="catalytic activity">
    <reaction>
        <text>L-seryl-[protein] + ATP = O-phospho-L-seryl-[protein] + ADP + H(+)</text>
        <dbReference type="Rhea" id="RHEA:17989"/>
        <dbReference type="Rhea" id="RHEA-COMP:9863"/>
        <dbReference type="Rhea" id="RHEA-COMP:11604"/>
        <dbReference type="ChEBI" id="CHEBI:15378"/>
        <dbReference type="ChEBI" id="CHEBI:29999"/>
        <dbReference type="ChEBI" id="CHEBI:30616"/>
        <dbReference type="ChEBI" id="CHEBI:83421"/>
        <dbReference type="ChEBI" id="CHEBI:456216"/>
        <dbReference type="EC" id="2.7.11.1"/>
    </reaction>
</comment>
<comment type="catalytic activity">
    <reaction>
        <text>L-threonyl-[protein] + ATP = O-phospho-L-threonyl-[protein] + ADP + H(+)</text>
        <dbReference type="Rhea" id="RHEA:46608"/>
        <dbReference type="Rhea" id="RHEA-COMP:11060"/>
        <dbReference type="Rhea" id="RHEA-COMP:11605"/>
        <dbReference type="ChEBI" id="CHEBI:15378"/>
        <dbReference type="ChEBI" id="CHEBI:30013"/>
        <dbReference type="ChEBI" id="CHEBI:30616"/>
        <dbReference type="ChEBI" id="CHEBI:61977"/>
        <dbReference type="ChEBI" id="CHEBI:456216"/>
        <dbReference type="EC" id="2.7.11.1"/>
    </reaction>
</comment>
<comment type="subunit">
    <text evidence="2">Self-associates. Interacts with ERN1 and TRAF2. Interaction with TRAF2 is facilitated under ER stress conditions, such as treatment with tunicamycin, and may promote TRAF2 phosphorylation. Interacts (via N-terminus) with STK25; the interaction promotes STK25 abundance at the level of protein expression and/or stability.</text>
</comment>
<comment type="subcellular location">
    <subcellularLocation>
        <location evidence="2">Cytoplasm</location>
    </subcellularLocation>
    <subcellularLocation>
        <location evidence="2">Cell membrane</location>
        <topology evidence="2">Peripheral membrane protein</topology>
    </subcellularLocation>
    <subcellularLocation>
        <location evidence="2">Membrane raft</location>
    </subcellularLocation>
    <subcellularLocation>
        <location evidence="2">Lipid droplet</location>
    </subcellularLocation>
    <text evidence="2">Located primarily outside cell membrane rafts and remains outside upon canonical TCR ligation. A small pool is detectable in cell membrane rafts in resting conditions but relocates outside the rafts upon TCR signaling. Localizes to lipid droplets in hepatocytes.</text>
</comment>
<comment type="tissue specificity">
    <text evidence="7">Ubiquitously expressed, with a higher expression in the retina.</text>
</comment>
<comment type="PTM">
    <text evidence="2">Autophosphorylated. Phosphorylation at Ser-324 by ATM following DNA damage is required for activation of the p38/MAPK14 stress-activated MAPK cascade. Phosphorylated at Ser-324 and on Tyr residues during T cell activation. Phosphorylated by LRRK2.</text>
</comment>
<comment type="similarity">
    <text evidence="8">Belongs to the protein kinase superfamily. STE Ser/Thr protein kinase family. STE20 subfamily.</text>
</comment>
<accession>Q53UA7</accession>